<gene>
    <name type="primary">mgp2</name>
    <name type="synonym">gacCC</name>
    <name type="ORF">DDB_G0270024</name>
</gene>
<proteinExistence type="inferred from homology"/>
<organism>
    <name type="scientific">Dictyostelium discoideum</name>
    <name type="common">Social amoeba</name>
    <dbReference type="NCBI Taxonomy" id="44689"/>
    <lineage>
        <taxon>Eukaryota</taxon>
        <taxon>Amoebozoa</taxon>
        <taxon>Evosea</taxon>
        <taxon>Eumycetozoa</taxon>
        <taxon>Dictyostelia</taxon>
        <taxon>Dictyosteliales</taxon>
        <taxon>Dictyosteliaceae</taxon>
        <taxon>Dictyostelium</taxon>
    </lineage>
</organism>
<evidence type="ECO:0000250" key="1"/>
<evidence type="ECO:0000255" key="2"/>
<evidence type="ECO:0000255" key="3">
    <source>
        <dbReference type="PROSITE-ProRule" id="PRU00172"/>
    </source>
</evidence>
<evidence type="ECO:0000255" key="4">
    <source>
        <dbReference type="PROSITE-ProRule" id="PRU01077"/>
    </source>
</evidence>
<evidence type="ECO:0000256" key="5">
    <source>
        <dbReference type="SAM" id="MobiDB-lite"/>
    </source>
</evidence>
<evidence type="ECO:0000269" key="6">
    <source>
    </source>
</evidence>
<keyword id="KW-0175">Coiled coil</keyword>
<keyword id="KW-0963">Cytoplasm</keyword>
<keyword id="KW-0343">GTPase activation</keyword>
<keyword id="KW-1185">Reference proteome</keyword>
<keyword id="KW-0926">Vacuole</keyword>
<accession>Q55CK2</accession>
<reference key="1">
    <citation type="journal article" date="2005" name="Nature">
        <title>The genome of the social amoeba Dictyostelium discoideum.</title>
        <authorList>
            <person name="Eichinger L."/>
            <person name="Pachebat J.A."/>
            <person name="Gloeckner G."/>
            <person name="Rajandream M.A."/>
            <person name="Sucgang R."/>
            <person name="Berriman M."/>
            <person name="Song J."/>
            <person name="Olsen R."/>
            <person name="Szafranski K."/>
            <person name="Xu Q."/>
            <person name="Tunggal B."/>
            <person name="Kummerfeld S."/>
            <person name="Madera M."/>
            <person name="Konfortov B.A."/>
            <person name="Rivero F."/>
            <person name="Bankier A.T."/>
            <person name="Lehmann R."/>
            <person name="Hamlin N."/>
            <person name="Davies R."/>
            <person name="Gaudet P."/>
            <person name="Fey P."/>
            <person name="Pilcher K."/>
            <person name="Chen G."/>
            <person name="Saunders D."/>
            <person name="Sodergren E.J."/>
            <person name="Davis P."/>
            <person name="Kerhornou A."/>
            <person name="Nie X."/>
            <person name="Hall N."/>
            <person name="Anjard C."/>
            <person name="Hemphill L."/>
            <person name="Bason N."/>
            <person name="Farbrother P."/>
            <person name="Desany B."/>
            <person name="Just E."/>
            <person name="Morio T."/>
            <person name="Rost R."/>
            <person name="Churcher C.M."/>
            <person name="Cooper J."/>
            <person name="Haydock S."/>
            <person name="van Driessche N."/>
            <person name="Cronin A."/>
            <person name="Goodhead I."/>
            <person name="Muzny D.M."/>
            <person name="Mourier T."/>
            <person name="Pain A."/>
            <person name="Lu M."/>
            <person name="Harper D."/>
            <person name="Lindsay R."/>
            <person name="Hauser H."/>
            <person name="James K.D."/>
            <person name="Quiles M."/>
            <person name="Madan Babu M."/>
            <person name="Saito T."/>
            <person name="Buchrieser C."/>
            <person name="Wardroper A."/>
            <person name="Felder M."/>
            <person name="Thangavelu M."/>
            <person name="Johnson D."/>
            <person name="Knights A."/>
            <person name="Loulseged H."/>
            <person name="Mungall K.L."/>
            <person name="Oliver K."/>
            <person name="Price C."/>
            <person name="Quail M.A."/>
            <person name="Urushihara H."/>
            <person name="Hernandez J."/>
            <person name="Rabbinowitsch E."/>
            <person name="Steffen D."/>
            <person name="Sanders M."/>
            <person name="Ma J."/>
            <person name="Kohara Y."/>
            <person name="Sharp S."/>
            <person name="Simmonds M.N."/>
            <person name="Spiegler S."/>
            <person name="Tivey A."/>
            <person name="Sugano S."/>
            <person name="White B."/>
            <person name="Walker D."/>
            <person name="Woodward J.R."/>
            <person name="Winckler T."/>
            <person name="Tanaka Y."/>
            <person name="Shaulsky G."/>
            <person name="Schleicher M."/>
            <person name="Weinstock G.M."/>
            <person name="Rosenthal A."/>
            <person name="Cox E.C."/>
            <person name="Chisholm R.L."/>
            <person name="Gibbs R.A."/>
            <person name="Loomis W.F."/>
            <person name="Platzer M."/>
            <person name="Kay R.R."/>
            <person name="Williams J.G."/>
            <person name="Dear P.H."/>
            <person name="Noegel A.A."/>
            <person name="Barrell B.G."/>
            <person name="Kuspa A."/>
        </authorList>
    </citation>
    <scope>NUCLEOTIDE SEQUENCE [LARGE SCALE GENOMIC DNA]</scope>
    <source>
        <strain>AX4</strain>
    </source>
</reference>
<reference key="2">
    <citation type="journal article" date="2008" name="J. Cell Sci.">
        <title>Dictyostelium MEGAPs: F-BAR domain proteins that regulate motility and membrane tubulation in contractile vacuoles.</title>
        <authorList>
            <person name="Heath R.J."/>
            <person name="Insall R.H."/>
        </authorList>
    </citation>
    <scope>DISRUPTION PHENOTYPE</scope>
    <scope>FUNCTION</scope>
</reference>
<name>MGP2_DICDI</name>
<protein>
    <recommendedName>
        <fullName>GTPase activating protein homolog 2</fullName>
    </recommendedName>
    <alternativeName>
        <fullName>GTPase activating factor for raC protein CC</fullName>
    </alternativeName>
    <alternativeName>
        <fullName>Rho GTPase-activating protein gacCC</fullName>
    </alternativeName>
</protein>
<dbReference type="EMBL" id="AAFI02000005">
    <property type="protein sequence ID" value="EAL72362.1"/>
    <property type="molecule type" value="Genomic_DNA"/>
</dbReference>
<dbReference type="RefSeq" id="XP_646479.1">
    <property type="nucleotide sequence ID" value="XM_641387.1"/>
</dbReference>
<dbReference type="SMR" id="Q55CK2"/>
<dbReference type="FunCoup" id="Q55CK2">
    <property type="interactions" value="128"/>
</dbReference>
<dbReference type="GlyGen" id="Q55CK2">
    <property type="glycosylation" value="1 site"/>
</dbReference>
<dbReference type="PaxDb" id="44689-DDB0233875"/>
<dbReference type="EnsemblProtists" id="EAL72362">
    <property type="protein sequence ID" value="EAL72362"/>
    <property type="gene ID" value="DDB_G0270024"/>
</dbReference>
<dbReference type="GeneID" id="8617441"/>
<dbReference type="KEGG" id="ddi:DDB_G0270024"/>
<dbReference type="dictyBase" id="DDB_G0270024">
    <property type="gene designation" value="mgp2"/>
</dbReference>
<dbReference type="VEuPathDB" id="AmoebaDB:DDB_G0270024"/>
<dbReference type="eggNOG" id="KOG3565">
    <property type="taxonomic scope" value="Eukaryota"/>
</dbReference>
<dbReference type="HOGENOM" id="CLU_328022_0_0_1"/>
<dbReference type="InParanoid" id="Q55CK2"/>
<dbReference type="OMA" id="AMIKDME"/>
<dbReference type="PhylomeDB" id="Q55CK2"/>
<dbReference type="PRO" id="PR:Q55CK2"/>
<dbReference type="Proteomes" id="UP000002195">
    <property type="component" value="Chromosome 1"/>
</dbReference>
<dbReference type="GO" id="GO:0000331">
    <property type="term" value="C:contractile vacuole"/>
    <property type="evidence" value="ECO:0007669"/>
    <property type="project" value="UniProtKB-SubCell"/>
</dbReference>
<dbReference type="GO" id="GO:0005737">
    <property type="term" value="C:cytoplasm"/>
    <property type="evidence" value="ECO:0000318"/>
    <property type="project" value="GO_Central"/>
</dbReference>
<dbReference type="GO" id="GO:0005096">
    <property type="term" value="F:GTPase activator activity"/>
    <property type="evidence" value="ECO:0000318"/>
    <property type="project" value="GO_Central"/>
</dbReference>
<dbReference type="GO" id="GO:0033298">
    <property type="term" value="P:contractile vacuole organization"/>
    <property type="evidence" value="ECO:0000316"/>
    <property type="project" value="dictyBase"/>
</dbReference>
<dbReference type="GO" id="GO:0006887">
    <property type="term" value="P:exocytosis"/>
    <property type="evidence" value="ECO:0000316"/>
    <property type="project" value="dictyBase"/>
</dbReference>
<dbReference type="GO" id="GO:0051490">
    <property type="term" value="P:negative regulation of filopodium assembly"/>
    <property type="evidence" value="ECO:0000315"/>
    <property type="project" value="dictyBase"/>
</dbReference>
<dbReference type="GO" id="GO:0042331">
    <property type="term" value="P:phototaxis"/>
    <property type="evidence" value="ECO:0000316"/>
    <property type="project" value="dictyBase"/>
</dbReference>
<dbReference type="GO" id="GO:0007165">
    <property type="term" value="P:signal transduction"/>
    <property type="evidence" value="ECO:0007669"/>
    <property type="project" value="InterPro"/>
</dbReference>
<dbReference type="GO" id="GO:0030587">
    <property type="term" value="P:sorocarp development"/>
    <property type="evidence" value="ECO:0000315"/>
    <property type="project" value="dictyBase"/>
</dbReference>
<dbReference type="CDD" id="cd07610">
    <property type="entry name" value="FCH_F-BAR"/>
    <property type="match status" value="1"/>
</dbReference>
<dbReference type="CDD" id="cd04389">
    <property type="entry name" value="RhoGAP_KIAA1688"/>
    <property type="match status" value="1"/>
</dbReference>
<dbReference type="FunFam" id="1.20.1270.60:FF:000060">
    <property type="entry name" value="Actin polymerization protein Bzz1"/>
    <property type="match status" value="1"/>
</dbReference>
<dbReference type="FunFam" id="1.10.555.10:FF:000105">
    <property type="entry name" value="Mental retardation GTPase activating protein homolog 2"/>
    <property type="match status" value="1"/>
</dbReference>
<dbReference type="Gene3D" id="1.20.1270.60">
    <property type="entry name" value="Arfaptin homology (AH) domain/BAR domain"/>
    <property type="match status" value="1"/>
</dbReference>
<dbReference type="Gene3D" id="1.10.555.10">
    <property type="entry name" value="Rho GTPase activation protein"/>
    <property type="match status" value="1"/>
</dbReference>
<dbReference type="InterPro" id="IPR027267">
    <property type="entry name" value="AH/BAR_dom_sf"/>
</dbReference>
<dbReference type="InterPro" id="IPR031160">
    <property type="entry name" value="F_BAR"/>
</dbReference>
<dbReference type="InterPro" id="IPR001060">
    <property type="entry name" value="FCH_dom"/>
</dbReference>
<dbReference type="InterPro" id="IPR008936">
    <property type="entry name" value="Rho_GTPase_activation_prot"/>
</dbReference>
<dbReference type="InterPro" id="IPR000198">
    <property type="entry name" value="RhoGAP_dom"/>
</dbReference>
<dbReference type="PANTHER" id="PTHR45876">
    <property type="entry name" value="FI04035P"/>
    <property type="match status" value="1"/>
</dbReference>
<dbReference type="PANTHER" id="PTHR45876:SF7">
    <property type="entry name" value="GTPASE ACTIVATING PROTEIN HOMOLOG 2"/>
    <property type="match status" value="1"/>
</dbReference>
<dbReference type="Pfam" id="PF00611">
    <property type="entry name" value="FCH"/>
    <property type="match status" value="1"/>
</dbReference>
<dbReference type="Pfam" id="PF00620">
    <property type="entry name" value="RhoGAP"/>
    <property type="match status" value="1"/>
</dbReference>
<dbReference type="SMART" id="SM00055">
    <property type="entry name" value="FCH"/>
    <property type="match status" value="1"/>
</dbReference>
<dbReference type="SMART" id="SM00324">
    <property type="entry name" value="RhoGAP"/>
    <property type="match status" value="1"/>
</dbReference>
<dbReference type="SUPFAM" id="SSF103657">
    <property type="entry name" value="BAR/IMD domain-like"/>
    <property type="match status" value="1"/>
</dbReference>
<dbReference type="SUPFAM" id="SSF48350">
    <property type="entry name" value="GTPase activation domain, GAP"/>
    <property type="match status" value="1"/>
</dbReference>
<dbReference type="PROSITE" id="PS51741">
    <property type="entry name" value="F_BAR"/>
    <property type="match status" value="1"/>
</dbReference>
<dbReference type="PROSITE" id="PS50238">
    <property type="entry name" value="RHOGAP"/>
    <property type="match status" value="1"/>
</dbReference>
<comment type="function">
    <text evidence="1 6">Rho GTPase-activating protein involved in the signal transduction pathway (By similarity). Regulator of the contractile vacuole network as well as involved in driving vacuole emptying.</text>
</comment>
<comment type="subcellular location">
    <subcellularLocation>
        <location>Cytoplasm</location>
    </subcellularLocation>
    <subcellularLocation>
        <location evidence="1">Contractile vacuole</location>
    </subcellularLocation>
</comment>
<comment type="disruption phenotype">
    <text evidence="6">Show a subtle phototaxis defect. mgp1-/mgp2-cells have a severe fruiting defect, an overabundance of filopodia and slug motility and function are affected. They empty their contractile vacuoles less efficiently than normal and consequently they have three times the usual number.</text>
</comment>
<feature type="chain" id="PRO_0000380225" description="GTPase activating protein homolog 2">
    <location>
        <begin position="1"/>
        <end position="877"/>
    </location>
</feature>
<feature type="domain" description="F-BAR" evidence="4">
    <location>
        <begin position="14"/>
        <end position="285"/>
    </location>
</feature>
<feature type="domain" description="Rho-GAP" evidence="3">
    <location>
        <begin position="374"/>
        <end position="560"/>
    </location>
</feature>
<feature type="region of interest" description="Disordered" evidence="5">
    <location>
        <begin position="589"/>
        <end position="612"/>
    </location>
</feature>
<feature type="region of interest" description="Disordered" evidence="5">
    <location>
        <begin position="644"/>
        <end position="704"/>
    </location>
</feature>
<feature type="region of interest" description="Disordered" evidence="5">
    <location>
        <begin position="749"/>
        <end position="800"/>
    </location>
</feature>
<feature type="coiled-coil region" evidence="2">
    <location>
        <begin position="130"/>
        <end position="214"/>
    </location>
</feature>
<feature type="compositionally biased region" description="Low complexity" evidence="5">
    <location>
        <begin position="593"/>
        <end position="612"/>
    </location>
</feature>
<feature type="compositionally biased region" description="Low complexity" evidence="5">
    <location>
        <begin position="653"/>
        <end position="676"/>
    </location>
</feature>
<feature type="compositionally biased region" description="Low complexity" evidence="5">
    <location>
        <begin position="749"/>
        <end position="779"/>
    </location>
</feature>
<feature type="compositionally biased region" description="Polar residues" evidence="5">
    <location>
        <begin position="780"/>
        <end position="800"/>
    </location>
</feature>
<feature type="site" description="Arginine finger; crucial for GTP hydrolysis by stabilizing the transition state" evidence="3">
    <location>
        <position position="416"/>
    </location>
</feature>
<sequence>MSSSANSSPATTKFKFTDNLWDGFDLLVKRTDNDLIQSKNILNFFKKKAELEEQHSKKLEKLSLKTMMTIDESTSINAISYNSSWKKIINSSMMESEQHTLLNTSILNKVIQPLQAMIKDMETKRKKILQEGIKLKQDMKEMVDELKKSQFKYDKAGKDLESSRMELREYREQLDHQQQQQPSDSDLNNISKIERRIQRCEQDFSNCDEEYREQIKATNDFQHLYNTEKLPKILNDFEHFVISHSHFSKSYFTNLVSVLIELPSAYQQNYEFVKKSVEMIDITNDVQEFIRKNLMKKQLAQPFQYEPYIEGKLTKKTISLTWNNKILSQFSRSSNNNTATANNTSSGNLNPYLNGGIGGTKKDEPILPTASFKVSLDELMNRQKDNHPTLEVPYVLQVLSTRIAQMKGHVTEGIFRVPGIISTIKETRLRIDKADFNLSNIDDVRTPAALLKQWLRDIPTALIPDSLYQQCIDTPTNAIAIVKTIPIINQRVLCYLINFLQIFTKFEFVAHSKMGTSNLAMVFAPCILRCTSTDANVMLNNVPNERLFVETLIKQIPPPLNTNEFLNLPISMSDAINDSEDIEELNDLDQLSNDDNNNSNTNTSNISIGSGSNSNIVVNYSNNSPNIESSTLPSQSVVTTIETLPPLNDDHNSGSGNESNSSSSNSTTTPTGSPTTASKPRGPRTQTLGWVRIKPAPKPSAEPTITLSSSIAAGTTTTTTTATGITTTTTTTAGPEKTIISPVIIKPAAATPTTTTPTTTPTTTTSPTTATIPAVSTSTIKTSSPDRTTPLTSSPPLASTKSTDELMKKLDQFTQETTPSIRIATTTTPTTITTPTTTATTTTITTDKTTPVTSSPPTASNISSEDLMKKLDQFINF</sequence>